<accession>B5EYB4</accession>
<feature type="chain" id="PRO_1000186079" description="tRNA 2-selenouridine synthase">
    <location>
        <begin position="1"/>
        <end position="364"/>
    </location>
</feature>
<feature type="domain" description="Rhodanese" evidence="1">
    <location>
        <begin position="14"/>
        <end position="137"/>
    </location>
</feature>
<feature type="active site" description="S-selanylcysteine intermediate" evidence="1">
    <location>
        <position position="97"/>
    </location>
</feature>
<gene>
    <name evidence="1" type="primary">selU</name>
    <name type="ordered locus">SeAg_B0560</name>
</gene>
<organism>
    <name type="scientific">Salmonella agona (strain SL483)</name>
    <dbReference type="NCBI Taxonomy" id="454166"/>
    <lineage>
        <taxon>Bacteria</taxon>
        <taxon>Pseudomonadati</taxon>
        <taxon>Pseudomonadota</taxon>
        <taxon>Gammaproteobacteria</taxon>
        <taxon>Enterobacterales</taxon>
        <taxon>Enterobacteriaceae</taxon>
        <taxon>Salmonella</taxon>
    </lineage>
</organism>
<reference key="1">
    <citation type="journal article" date="2011" name="J. Bacteriol.">
        <title>Comparative genomics of 28 Salmonella enterica isolates: evidence for CRISPR-mediated adaptive sublineage evolution.</title>
        <authorList>
            <person name="Fricke W.F."/>
            <person name="Mammel M.K."/>
            <person name="McDermott P.F."/>
            <person name="Tartera C."/>
            <person name="White D.G."/>
            <person name="Leclerc J.E."/>
            <person name="Ravel J."/>
            <person name="Cebula T.A."/>
        </authorList>
    </citation>
    <scope>NUCLEOTIDE SEQUENCE [LARGE SCALE GENOMIC DNA]</scope>
    <source>
        <strain>SL483</strain>
    </source>
</reference>
<comment type="function">
    <text evidence="1">Involved in the post-transcriptional modification of the uridine at the wobble position (U34) of tRNA(Lys), tRNA(Glu) and tRNA(Gln). Catalyzes the conversion of 2-thiouridine (S2U-RNA) to 2-selenouridine (Se2U-RNA). Acts in a two-step process involving geranylation of 2-thiouridine (S2U) to S-geranyl-2-thiouridine (geS2U) and subsequent selenation of the latter derivative to 2-selenouridine (Se2U) in the tRNA chain.</text>
</comment>
<comment type="catalytic activity">
    <reaction evidence="1">
        <text>5-methylaminomethyl-2-thiouridine(34) in tRNA + selenophosphate + (2E)-geranyl diphosphate + H2O + H(+) = 5-methylaminomethyl-2-selenouridine(34) in tRNA + (2E)-thiogeraniol + phosphate + diphosphate</text>
        <dbReference type="Rhea" id="RHEA:42716"/>
        <dbReference type="Rhea" id="RHEA-COMP:10195"/>
        <dbReference type="Rhea" id="RHEA-COMP:10196"/>
        <dbReference type="ChEBI" id="CHEBI:15377"/>
        <dbReference type="ChEBI" id="CHEBI:15378"/>
        <dbReference type="ChEBI" id="CHEBI:16144"/>
        <dbReference type="ChEBI" id="CHEBI:33019"/>
        <dbReference type="ChEBI" id="CHEBI:43474"/>
        <dbReference type="ChEBI" id="CHEBI:58057"/>
        <dbReference type="ChEBI" id="CHEBI:74455"/>
        <dbReference type="ChEBI" id="CHEBI:82743"/>
        <dbReference type="ChEBI" id="CHEBI:143703"/>
        <dbReference type="EC" id="2.9.1.3"/>
    </reaction>
    <physiologicalReaction direction="left-to-right" evidence="1">
        <dbReference type="Rhea" id="RHEA:42717"/>
    </physiologicalReaction>
</comment>
<comment type="catalytic activity">
    <reaction evidence="1">
        <text>5-methylaminomethyl-2-thiouridine(34) in tRNA + (2E)-geranyl diphosphate = 5-methylaminomethyl-S-(2E)-geranyl-thiouridine(34) in tRNA + diphosphate</text>
        <dbReference type="Rhea" id="RHEA:14085"/>
        <dbReference type="Rhea" id="RHEA-COMP:10195"/>
        <dbReference type="Rhea" id="RHEA-COMP:14654"/>
        <dbReference type="ChEBI" id="CHEBI:33019"/>
        <dbReference type="ChEBI" id="CHEBI:58057"/>
        <dbReference type="ChEBI" id="CHEBI:74455"/>
        <dbReference type="ChEBI" id="CHEBI:140632"/>
    </reaction>
    <physiologicalReaction direction="left-to-right" evidence="1">
        <dbReference type="Rhea" id="RHEA:14086"/>
    </physiologicalReaction>
</comment>
<comment type="catalytic activity">
    <reaction evidence="1">
        <text>5-methylaminomethyl-S-(2E)-geranyl-thiouridine(34) in tRNA + selenophosphate + H(+) = 5-methylaminomethyl-2-(Se-phospho)selenouridine(34) in tRNA + (2E)-thiogeraniol</text>
        <dbReference type="Rhea" id="RHEA:60172"/>
        <dbReference type="Rhea" id="RHEA-COMP:14654"/>
        <dbReference type="Rhea" id="RHEA-COMP:15523"/>
        <dbReference type="ChEBI" id="CHEBI:15378"/>
        <dbReference type="ChEBI" id="CHEBI:16144"/>
        <dbReference type="ChEBI" id="CHEBI:140632"/>
        <dbReference type="ChEBI" id="CHEBI:143702"/>
        <dbReference type="ChEBI" id="CHEBI:143703"/>
    </reaction>
    <physiologicalReaction direction="left-to-right" evidence="1">
        <dbReference type="Rhea" id="RHEA:60173"/>
    </physiologicalReaction>
</comment>
<comment type="catalytic activity">
    <reaction evidence="1">
        <text>5-methylaminomethyl-2-(Se-phospho)selenouridine(34) in tRNA + H2O = 5-methylaminomethyl-2-selenouridine(34) in tRNA + phosphate</text>
        <dbReference type="Rhea" id="RHEA:60176"/>
        <dbReference type="Rhea" id="RHEA-COMP:10196"/>
        <dbReference type="Rhea" id="RHEA-COMP:15523"/>
        <dbReference type="ChEBI" id="CHEBI:15377"/>
        <dbReference type="ChEBI" id="CHEBI:43474"/>
        <dbReference type="ChEBI" id="CHEBI:82743"/>
        <dbReference type="ChEBI" id="CHEBI:143702"/>
    </reaction>
    <physiologicalReaction direction="left-to-right" evidence="1">
        <dbReference type="Rhea" id="RHEA:60177"/>
    </physiologicalReaction>
</comment>
<comment type="subunit">
    <text evidence="1">Monomer.</text>
</comment>
<comment type="similarity">
    <text evidence="1">Belongs to the SelU family.</text>
</comment>
<name>SELU_SALA4</name>
<evidence type="ECO:0000255" key="1">
    <source>
        <dbReference type="HAMAP-Rule" id="MF_01622"/>
    </source>
</evidence>
<keyword id="KW-0711">Selenium</keyword>
<keyword id="KW-0808">Transferase</keyword>
<dbReference type="EC" id="2.9.1.3" evidence="1"/>
<dbReference type="EMBL" id="CP001138">
    <property type="protein sequence ID" value="ACH51639.1"/>
    <property type="molecule type" value="Genomic_DNA"/>
</dbReference>
<dbReference type="SMR" id="B5EYB4"/>
<dbReference type="KEGG" id="sea:SeAg_B0560"/>
<dbReference type="HOGENOM" id="CLU_043456_1_0_6"/>
<dbReference type="Proteomes" id="UP000008819">
    <property type="component" value="Chromosome"/>
</dbReference>
<dbReference type="GO" id="GO:0016765">
    <property type="term" value="F:transferase activity, transferring alkyl or aryl (other than methyl) groups"/>
    <property type="evidence" value="ECO:0007669"/>
    <property type="project" value="UniProtKB-UniRule"/>
</dbReference>
<dbReference type="GO" id="GO:0043828">
    <property type="term" value="F:tRNA 2-selenouridine synthase activity"/>
    <property type="evidence" value="ECO:0007669"/>
    <property type="project" value="UniProtKB-EC"/>
</dbReference>
<dbReference type="GO" id="GO:0002098">
    <property type="term" value="P:tRNA wobble uridine modification"/>
    <property type="evidence" value="ECO:0007669"/>
    <property type="project" value="UniProtKB-UniRule"/>
</dbReference>
<dbReference type="CDD" id="cd01520">
    <property type="entry name" value="RHOD_YbbB"/>
    <property type="match status" value="1"/>
</dbReference>
<dbReference type="FunFam" id="3.40.250.10:FF:000009">
    <property type="entry name" value="tRNA 2-selenouridine/geranyl-2-thiouridine synthase"/>
    <property type="match status" value="1"/>
</dbReference>
<dbReference type="Gene3D" id="3.40.250.10">
    <property type="entry name" value="Rhodanese-like domain"/>
    <property type="match status" value="1"/>
</dbReference>
<dbReference type="HAMAP" id="MF_01622">
    <property type="entry name" value="tRNA_sel_U_synth"/>
    <property type="match status" value="1"/>
</dbReference>
<dbReference type="InterPro" id="IPR001763">
    <property type="entry name" value="Rhodanese-like_dom"/>
</dbReference>
<dbReference type="InterPro" id="IPR036873">
    <property type="entry name" value="Rhodanese-like_dom_sf"/>
</dbReference>
<dbReference type="InterPro" id="IPR017582">
    <property type="entry name" value="SelU"/>
</dbReference>
<dbReference type="NCBIfam" id="NF008749">
    <property type="entry name" value="PRK11784.1-1"/>
    <property type="match status" value="1"/>
</dbReference>
<dbReference type="NCBIfam" id="NF008751">
    <property type="entry name" value="PRK11784.1-3"/>
    <property type="match status" value="1"/>
</dbReference>
<dbReference type="NCBIfam" id="TIGR03167">
    <property type="entry name" value="tRNA_sel_U_synt"/>
    <property type="match status" value="1"/>
</dbReference>
<dbReference type="PANTHER" id="PTHR30401">
    <property type="entry name" value="TRNA 2-SELENOURIDINE SYNTHASE"/>
    <property type="match status" value="1"/>
</dbReference>
<dbReference type="PANTHER" id="PTHR30401:SF0">
    <property type="entry name" value="TRNA 2-SELENOURIDINE SYNTHASE"/>
    <property type="match status" value="1"/>
</dbReference>
<dbReference type="Pfam" id="PF00581">
    <property type="entry name" value="Rhodanese"/>
    <property type="match status" value="1"/>
</dbReference>
<dbReference type="SMART" id="SM00450">
    <property type="entry name" value="RHOD"/>
    <property type="match status" value="1"/>
</dbReference>
<dbReference type="SUPFAM" id="SSF52821">
    <property type="entry name" value="Rhodanese/Cell cycle control phosphatase"/>
    <property type="match status" value="1"/>
</dbReference>
<dbReference type="PROSITE" id="PS50206">
    <property type="entry name" value="RHODANESE_3"/>
    <property type="match status" value="1"/>
</dbReference>
<sequence>MQDRQKAQDYRALLLADTPLIDVRAPIEFEQGAMPGAINLPLMMDNERAAVGTCYKRQGADAALALGHRLVCGDIRQQRLEAWKAAYQRFPNGYLCCARGGQRSHIVQRWLQETGIDCPLIEGGYKALRQTAIQATWQLAQKPILLIGGCTGSGKTQLVRQQPNGVDLEGLARHRGSSFGRTLNPQLSQASFENKLAVELLKINAHQTLKRWVLEDEGRTIGANHLPECLRERMAQAPIAVVEDPFALRLERLREEYFIRMHHDFTHAYGDEAGWQAYSEYLHHGLFAIRRRLGLQRFAELTDTLDRALAEQLSNGSTDGHMAWLVPLLNEYYDPMYRYQLEKKAANIVFRGPWQDVANWLKAQ</sequence>
<proteinExistence type="inferred from homology"/>
<protein>
    <recommendedName>
        <fullName evidence="1">tRNA 2-selenouridine synthase</fullName>
        <ecNumber evidence="1">2.9.1.3</ecNumber>
    </recommendedName>
</protein>